<evidence type="ECO:0000250" key="1">
    <source>
        <dbReference type="UniProtKB" id="Q5TCY1"/>
    </source>
</evidence>
<evidence type="ECO:0000255" key="2">
    <source>
        <dbReference type="PROSITE-ProRule" id="PRU00159"/>
    </source>
</evidence>
<evidence type="ECO:0000256" key="3">
    <source>
        <dbReference type="SAM" id="MobiDB-lite"/>
    </source>
</evidence>
<evidence type="ECO:0000269" key="4">
    <source>
    </source>
</evidence>
<evidence type="ECO:0000303" key="5">
    <source>
    </source>
</evidence>
<evidence type="ECO:0000305" key="6"/>
<evidence type="ECO:0000312" key="7">
    <source>
        <dbReference type="EMBL" id="AFA28428.1"/>
    </source>
</evidence>
<evidence type="ECO:0000312" key="8">
    <source>
        <dbReference type="FlyBase" id="FBgn0039908"/>
    </source>
</evidence>
<evidence type="ECO:0000312" key="9">
    <source>
        <dbReference type="Proteomes" id="UP000000803"/>
    </source>
</evidence>
<gene>
    <name evidence="5" type="primary">Asator</name>
    <name evidence="8" type="ORF">CG11533</name>
</gene>
<organism evidence="9">
    <name type="scientific">Drosophila melanogaster</name>
    <name type="common">Fruit fly</name>
    <dbReference type="NCBI Taxonomy" id="7227"/>
    <lineage>
        <taxon>Eukaryota</taxon>
        <taxon>Metazoa</taxon>
        <taxon>Ecdysozoa</taxon>
        <taxon>Arthropoda</taxon>
        <taxon>Hexapoda</taxon>
        <taxon>Insecta</taxon>
        <taxon>Pterygota</taxon>
        <taxon>Neoptera</taxon>
        <taxon>Endopterygota</taxon>
        <taxon>Diptera</taxon>
        <taxon>Brachycera</taxon>
        <taxon>Muscomorpha</taxon>
        <taxon>Ephydroidea</taxon>
        <taxon>Drosophilidae</taxon>
        <taxon>Drosophila</taxon>
        <taxon>Sophophora</taxon>
    </lineage>
</organism>
<proteinExistence type="evidence at protein level"/>
<feature type="chain" id="PRO_0000439147" description="Tau-tubulin kinase homolog Asator">
    <location>
        <begin position="1"/>
        <end position="1262"/>
    </location>
</feature>
<feature type="domain" description="Protein kinase" evidence="2">
    <location>
        <begin position="173"/>
        <end position="436"/>
    </location>
</feature>
<feature type="region of interest" description="Disordered" evidence="3">
    <location>
        <begin position="13"/>
        <end position="35"/>
    </location>
</feature>
<feature type="region of interest" description="Disordered" evidence="3">
    <location>
        <begin position="662"/>
        <end position="724"/>
    </location>
</feature>
<feature type="region of interest" description="Disordered" evidence="3">
    <location>
        <begin position="755"/>
        <end position="792"/>
    </location>
</feature>
<feature type="region of interest" description="Disordered" evidence="3">
    <location>
        <begin position="984"/>
        <end position="1003"/>
    </location>
</feature>
<feature type="compositionally biased region" description="Polar residues" evidence="3">
    <location>
        <begin position="20"/>
        <end position="35"/>
    </location>
</feature>
<feature type="compositionally biased region" description="Basic and acidic residues" evidence="3">
    <location>
        <begin position="667"/>
        <end position="679"/>
    </location>
</feature>
<feature type="compositionally biased region" description="Polar residues" evidence="3">
    <location>
        <begin position="755"/>
        <end position="776"/>
    </location>
</feature>
<feature type="active site" description="Proton acceptor" evidence="2">
    <location>
        <position position="293"/>
    </location>
</feature>
<feature type="binding site" evidence="2">
    <location>
        <begin position="179"/>
        <end position="187"/>
    </location>
    <ligand>
        <name>ATP</name>
        <dbReference type="ChEBI" id="CHEBI:30616"/>
    </ligand>
</feature>
<feature type="binding site" evidence="2">
    <location>
        <position position="202"/>
    </location>
    <ligand>
        <name>ATP</name>
        <dbReference type="ChEBI" id="CHEBI:30616"/>
    </ligand>
</feature>
<feature type="splice variant" id="VSP_058795" description="In isoform F.">
    <location>
        <begin position="1"/>
        <end position="156"/>
    </location>
</feature>
<feature type="splice variant" id="VSP_058796" description="In isoform F.">
    <original>YRMDIARNVCVRETYSEITHLAR</original>
    <variation>SILNKSLPVIIYIYMHAVTFFCF</variation>
    <location>
        <begin position="945"/>
        <end position="967"/>
    </location>
</feature>
<feature type="splice variant" id="VSP_058797" description="In isoform F.">
    <location>
        <begin position="968"/>
        <end position="1262"/>
    </location>
</feature>
<dbReference type="EC" id="2.7.11.1" evidence="1"/>
<dbReference type="EMBL" id="AE014135">
    <property type="protein sequence ID" value="AAN06495.2"/>
    <property type="molecule type" value="Genomic_DNA"/>
</dbReference>
<dbReference type="EMBL" id="AE014135">
    <property type="protein sequence ID" value="AAN06496.2"/>
    <property type="molecule type" value="Genomic_DNA"/>
</dbReference>
<dbReference type="EMBL" id="BT133187">
    <property type="protein sequence ID" value="AFA28428.1"/>
    <property type="molecule type" value="mRNA"/>
</dbReference>
<dbReference type="RefSeq" id="NP_726576.2">
    <molecule id="Q8IMC6-1"/>
    <property type="nucleotide sequence ID" value="NM_166765.3"/>
</dbReference>
<dbReference type="RefSeq" id="NP_726577.2">
    <molecule id="Q8IMC6-2"/>
    <property type="nucleotide sequence ID" value="NM_166766.3"/>
</dbReference>
<dbReference type="SMR" id="Q8IMC6"/>
<dbReference type="FunCoup" id="Q8IMC6">
    <property type="interactions" value="60"/>
</dbReference>
<dbReference type="STRING" id="7227.FBpp0289571"/>
<dbReference type="PaxDb" id="7227-FBpp0289571"/>
<dbReference type="EnsemblMetazoa" id="FBtr0300343">
    <molecule id="Q8IMC6-1"/>
    <property type="protein sequence ID" value="FBpp0289572"/>
    <property type="gene ID" value="FBgn0039908"/>
</dbReference>
<dbReference type="EnsemblMetazoa" id="FBtr0300344">
    <molecule id="Q8IMC6-2"/>
    <property type="protein sequence ID" value="FBpp0289573"/>
    <property type="gene ID" value="FBgn0039908"/>
</dbReference>
<dbReference type="GeneID" id="43794"/>
<dbReference type="KEGG" id="dme:Dmel_CG11533"/>
<dbReference type="AGR" id="FB:FBgn0039908"/>
<dbReference type="CTD" id="43794"/>
<dbReference type="FlyBase" id="FBgn0039908">
    <property type="gene designation" value="Asator"/>
</dbReference>
<dbReference type="VEuPathDB" id="VectorBase:FBgn0039908"/>
<dbReference type="eggNOG" id="KOG1164">
    <property type="taxonomic scope" value="Eukaryota"/>
</dbReference>
<dbReference type="GeneTree" id="ENSGT00940000160367"/>
<dbReference type="InParanoid" id="Q8IMC6"/>
<dbReference type="OrthoDB" id="5979581at2759"/>
<dbReference type="BioGRID-ORCS" id="43794">
    <property type="hits" value="0 hits in 3 CRISPR screens"/>
</dbReference>
<dbReference type="GenomeRNAi" id="43794"/>
<dbReference type="PRO" id="PR:Q8IMC6"/>
<dbReference type="Proteomes" id="UP000000803">
    <property type="component" value="Chromosome 4"/>
</dbReference>
<dbReference type="Bgee" id="FBgn0039908">
    <property type="expression patterns" value="Expressed in indirect flight muscle cell (Drosophila) in post-embryonic organism and 270 other cell types or tissues"/>
</dbReference>
<dbReference type="ExpressionAtlas" id="Q8IMC6">
    <property type="expression patterns" value="baseline and differential"/>
</dbReference>
<dbReference type="GO" id="GO:0005737">
    <property type="term" value="C:cytoplasm"/>
    <property type="evidence" value="ECO:0000314"/>
    <property type="project" value="FlyBase"/>
</dbReference>
<dbReference type="GO" id="GO:0005634">
    <property type="term" value="C:nucleus"/>
    <property type="evidence" value="ECO:0000318"/>
    <property type="project" value="GO_Central"/>
</dbReference>
<dbReference type="GO" id="GO:0005819">
    <property type="term" value="C:spindle"/>
    <property type="evidence" value="ECO:0000314"/>
    <property type="project" value="FlyBase"/>
</dbReference>
<dbReference type="GO" id="GO:0005524">
    <property type="term" value="F:ATP binding"/>
    <property type="evidence" value="ECO:0007669"/>
    <property type="project" value="UniProtKB-KW"/>
</dbReference>
<dbReference type="GO" id="GO:0106310">
    <property type="term" value="F:protein serine kinase activity"/>
    <property type="evidence" value="ECO:0007669"/>
    <property type="project" value="RHEA"/>
</dbReference>
<dbReference type="GO" id="GO:0004674">
    <property type="term" value="F:protein serine/threonine kinase activity"/>
    <property type="evidence" value="ECO:0000318"/>
    <property type="project" value="GO_Central"/>
</dbReference>
<dbReference type="GO" id="GO:0007165">
    <property type="term" value="P:signal transduction"/>
    <property type="evidence" value="ECO:0000318"/>
    <property type="project" value="GO_Central"/>
</dbReference>
<dbReference type="CDD" id="cd14017">
    <property type="entry name" value="STKc_TTBK"/>
    <property type="match status" value="1"/>
</dbReference>
<dbReference type="FunFam" id="1.10.510.10:FF:000481">
    <property type="entry name" value="Asator, isoform D"/>
    <property type="match status" value="1"/>
</dbReference>
<dbReference type="FunFam" id="3.30.200.20:FF:000358">
    <property type="entry name" value="Tau tubulin kinase 2b"/>
    <property type="match status" value="1"/>
</dbReference>
<dbReference type="Gene3D" id="1.10.510.10">
    <property type="entry name" value="Transferase(Phosphotransferase) domain 1"/>
    <property type="match status" value="1"/>
</dbReference>
<dbReference type="InterPro" id="IPR050235">
    <property type="entry name" value="CK1_Ser-Thr_kinase"/>
</dbReference>
<dbReference type="InterPro" id="IPR011009">
    <property type="entry name" value="Kinase-like_dom_sf"/>
</dbReference>
<dbReference type="InterPro" id="IPR000719">
    <property type="entry name" value="Prot_kinase_dom"/>
</dbReference>
<dbReference type="InterPro" id="IPR017441">
    <property type="entry name" value="Protein_kinase_ATP_BS"/>
</dbReference>
<dbReference type="InterPro" id="IPR047916">
    <property type="entry name" value="TTBK_Asator-like_STKc"/>
</dbReference>
<dbReference type="PANTHER" id="PTHR11909">
    <property type="entry name" value="CASEIN KINASE-RELATED"/>
    <property type="match status" value="1"/>
</dbReference>
<dbReference type="Pfam" id="PF00069">
    <property type="entry name" value="Pkinase"/>
    <property type="match status" value="1"/>
</dbReference>
<dbReference type="SMART" id="SM00220">
    <property type="entry name" value="S_TKc"/>
    <property type="match status" value="1"/>
</dbReference>
<dbReference type="SUPFAM" id="SSF56112">
    <property type="entry name" value="Protein kinase-like (PK-like)"/>
    <property type="match status" value="1"/>
</dbReference>
<dbReference type="PROSITE" id="PS00107">
    <property type="entry name" value="PROTEIN_KINASE_ATP"/>
    <property type="match status" value="1"/>
</dbReference>
<dbReference type="PROSITE" id="PS50011">
    <property type="entry name" value="PROTEIN_KINASE_DOM"/>
    <property type="match status" value="1"/>
</dbReference>
<accession>Q8IMC6</accession>
<accession>Q8IMC5</accession>
<keyword id="KW-0025">Alternative splicing</keyword>
<keyword id="KW-0067">ATP-binding</keyword>
<keyword id="KW-0963">Cytoplasm</keyword>
<keyword id="KW-0206">Cytoskeleton</keyword>
<keyword id="KW-0418">Kinase</keyword>
<keyword id="KW-0547">Nucleotide-binding</keyword>
<keyword id="KW-1185">Reference proteome</keyword>
<keyword id="KW-0723">Serine/threonine-protein kinase</keyword>
<keyword id="KW-0808">Transferase</keyword>
<reference evidence="9" key="1">
    <citation type="journal article" date="2000" name="Science">
        <title>The genome sequence of Drosophila melanogaster.</title>
        <authorList>
            <person name="Adams M.D."/>
            <person name="Celniker S.E."/>
            <person name="Holt R.A."/>
            <person name="Evans C.A."/>
            <person name="Gocayne J.D."/>
            <person name="Amanatides P.G."/>
            <person name="Scherer S.E."/>
            <person name="Li P.W."/>
            <person name="Hoskins R.A."/>
            <person name="Galle R.F."/>
            <person name="George R.A."/>
            <person name="Lewis S.E."/>
            <person name="Richards S."/>
            <person name="Ashburner M."/>
            <person name="Henderson S.N."/>
            <person name="Sutton G.G."/>
            <person name="Wortman J.R."/>
            <person name="Yandell M.D."/>
            <person name="Zhang Q."/>
            <person name="Chen L.X."/>
            <person name="Brandon R.C."/>
            <person name="Rogers Y.-H.C."/>
            <person name="Blazej R.G."/>
            <person name="Champe M."/>
            <person name="Pfeiffer B.D."/>
            <person name="Wan K.H."/>
            <person name="Doyle C."/>
            <person name="Baxter E.G."/>
            <person name="Helt G."/>
            <person name="Nelson C.R."/>
            <person name="Miklos G.L.G."/>
            <person name="Abril J.F."/>
            <person name="Agbayani A."/>
            <person name="An H.-J."/>
            <person name="Andrews-Pfannkoch C."/>
            <person name="Baldwin D."/>
            <person name="Ballew R.M."/>
            <person name="Basu A."/>
            <person name="Baxendale J."/>
            <person name="Bayraktaroglu L."/>
            <person name="Beasley E.M."/>
            <person name="Beeson K.Y."/>
            <person name="Benos P.V."/>
            <person name="Berman B.P."/>
            <person name="Bhandari D."/>
            <person name="Bolshakov S."/>
            <person name="Borkova D."/>
            <person name="Botchan M.R."/>
            <person name="Bouck J."/>
            <person name="Brokstein P."/>
            <person name="Brottier P."/>
            <person name="Burtis K.C."/>
            <person name="Busam D.A."/>
            <person name="Butler H."/>
            <person name="Cadieu E."/>
            <person name="Center A."/>
            <person name="Chandra I."/>
            <person name="Cherry J.M."/>
            <person name="Cawley S."/>
            <person name="Dahlke C."/>
            <person name="Davenport L.B."/>
            <person name="Davies P."/>
            <person name="de Pablos B."/>
            <person name="Delcher A."/>
            <person name="Deng Z."/>
            <person name="Mays A.D."/>
            <person name="Dew I."/>
            <person name="Dietz S.M."/>
            <person name="Dodson K."/>
            <person name="Doup L.E."/>
            <person name="Downes M."/>
            <person name="Dugan-Rocha S."/>
            <person name="Dunkov B.C."/>
            <person name="Dunn P."/>
            <person name="Durbin K.J."/>
            <person name="Evangelista C.C."/>
            <person name="Ferraz C."/>
            <person name="Ferriera S."/>
            <person name="Fleischmann W."/>
            <person name="Fosler C."/>
            <person name="Gabrielian A.E."/>
            <person name="Garg N.S."/>
            <person name="Gelbart W.M."/>
            <person name="Glasser K."/>
            <person name="Glodek A."/>
            <person name="Gong F."/>
            <person name="Gorrell J.H."/>
            <person name="Gu Z."/>
            <person name="Guan P."/>
            <person name="Harris M."/>
            <person name="Harris N.L."/>
            <person name="Harvey D.A."/>
            <person name="Heiman T.J."/>
            <person name="Hernandez J.R."/>
            <person name="Houck J."/>
            <person name="Hostin D."/>
            <person name="Houston K.A."/>
            <person name="Howland T.J."/>
            <person name="Wei M.-H."/>
            <person name="Ibegwam C."/>
            <person name="Jalali M."/>
            <person name="Kalush F."/>
            <person name="Karpen G.H."/>
            <person name="Ke Z."/>
            <person name="Kennison J.A."/>
            <person name="Ketchum K.A."/>
            <person name="Kimmel B.E."/>
            <person name="Kodira C.D."/>
            <person name="Kraft C.L."/>
            <person name="Kravitz S."/>
            <person name="Kulp D."/>
            <person name="Lai Z."/>
            <person name="Lasko P."/>
            <person name="Lei Y."/>
            <person name="Levitsky A.A."/>
            <person name="Li J.H."/>
            <person name="Li Z."/>
            <person name="Liang Y."/>
            <person name="Lin X."/>
            <person name="Liu X."/>
            <person name="Mattei B."/>
            <person name="McIntosh T.C."/>
            <person name="McLeod M.P."/>
            <person name="McPherson D."/>
            <person name="Merkulov G."/>
            <person name="Milshina N.V."/>
            <person name="Mobarry C."/>
            <person name="Morris J."/>
            <person name="Moshrefi A."/>
            <person name="Mount S.M."/>
            <person name="Moy M."/>
            <person name="Murphy B."/>
            <person name="Murphy L."/>
            <person name="Muzny D.M."/>
            <person name="Nelson D.L."/>
            <person name="Nelson D.R."/>
            <person name="Nelson K.A."/>
            <person name="Nixon K."/>
            <person name="Nusskern D.R."/>
            <person name="Pacleb J.M."/>
            <person name="Palazzolo M."/>
            <person name="Pittman G.S."/>
            <person name="Pan S."/>
            <person name="Pollard J."/>
            <person name="Puri V."/>
            <person name="Reese M.G."/>
            <person name="Reinert K."/>
            <person name="Remington K."/>
            <person name="Saunders R.D.C."/>
            <person name="Scheeler F."/>
            <person name="Shen H."/>
            <person name="Shue B.C."/>
            <person name="Siden-Kiamos I."/>
            <person name="Simpson M."/>
            <person name="Skupski M.P."/>
            <person name="Smith T.J."/>
            <person name="Spier E."/>
            <person name="Spradling A.C."/>
            <person name="Stapleton M."/>
            <person name="Strong R."/>
            <person name="Sun E."/>
            <person name="Svirskas R."/>
            <person name="Tector C."/>
            <person name="Turner R."/>
            <person name="Venter E."/>
            <person name="Wang A.H."/>
            <person name="Wang X."/>
            <person name="Wang Z.-Y."/>
            <person name="Wassarman D.A."/>
            <person name="Weinstock G.M."/>
            <person name="Weissenbach J."/>
            <person name="Williams S.M."/>
            <person name="Woodage T."/>
            <person name="Worley K.C."/>
            <person name="Wu D."/>
            <person name="Yang S."/>
            <person name="Yao Q.A."/>
            <person name="Ye J."/>
            <person name="Yeh R.-F."/>
            <person name="Zaveri J.S."/>
            <person name="Zhan M."/>
            <person name="Zhang G."/>
            <person name="Zhao Q."/>
            <person name="Zheng L."/>
            <person name="Zheng X.H."/>
            <person name="Zhong F.N."/>
            <person name="Zhong W."/>
            <person name="Zhou X."/>
            <person name="Zhu S.C."/>
            <person name="Zhu X."/>
            <person name="Smith H.O."/>
            <person name="Gibbs R.A."/>
            <person name="Myers E.W."/>
            <person name="Rubin G.M."/>
            <person name="Venter J.C."/>
        </authorList>
    </citation>
    <scope>NUCLEOTIDE SEQUENCE [LARGE SCALE GENOMIC DNA]</scope>
    <source>
        <strain evidence="9">Berkeley</strain>
    </source>
</reference>
<reference evidence="9" key="2">
    <citation type="journal article" date="2002" name="Genome Biol.">
        <title>Annotation of the Drosophila melanogaster euchromatic genome: a systematic review.</title>
        <authorList>
            <person name="Misra S."/>
            <person name="Crosby M.A."/>
            <person name="Mungall C.J."/>
            <person name="Matthews B.B."/>
            <person name="Campbell K.S."/>
            <person name="Hradecky P."/>
            <person name="Huang Y."/>
            <person name="Kaminker J.S."/>
            <person name="Millburn G.H."/>
            <person name="Prochnik S.E."/>
            <person name="Smith C.D."/>
            <person name="Tupy J.L."/>
            <person name="Whitfield E.J."/>
            <person name="Bayraktaroglu L."/>
            <person name="Berman B.P."/>
            <person name="Bettencourt B.R."/>
            <person name="Celniker S.E."/>
            <person name="de Grey A.D.N.J."/>
            <person name="Drysdale R.A."/>
            <person name="Harris N.L."/>
            <person name="Richter J."/>
            <person name="Russo S."/>
            <person name="Schroeder A.J."/>
            <person name="Shu S.Q."/>
            <person name="Stapleton M."/>
            <person name="Yamada C."/>
            <person name="Ashburner M."/>
            <person name="Gelbart W.M."/>
            <person name="Rubin G.M."/>
            <person name="Lewis S.E."/>
        </authorList>
    </citation>
    <scope>GENOME REANNOTATION</scope>
    <source>
        <strain evidence="9">Berkeley</strain>
    </source>
</reference>
<reference evidence="7" key="3">
    <citation type="submission" date="2012-02" db="EMBL/GenBank/DDBJ databases">
        <authorList>
            <person name="Carlson J."/>
            <person name="Booth B."/>
            <person name="Frise E."/>
            <person name="Park S."/>
            <person name="Wan K."/>
            <person name="Yu C."/>
            <person name="Celniker S."/>
        </authorList>
    </citation>
    <scope>NUCLEOTIDE SEQUENCE [LARGE SCALE MRNA]</scope>
</reference>
<reference evidence="6" key="4">
    <citation type="journal article" date="2009" name="Dev. Dyn.">
        <title>Asator, a tau-tubulin kinase homolog in Drosophila localizes to the mitotic spindle.</title>
        <authorList>
            <person name="Qi H."/>
            <person name="Yao C."/>
            <person name="Cai W."/>
            <person name="Girton J."/>
            <person name="Johansen K.M."/>
            <person name="Johansen J."/>
        </authorList>
    </citation>
    <scope>FUNCTION</scope>
    <scope>INTERACTION WITH MGTOR</scope>
    <scope>SUBCELLULAR LOCATION</scope>
    <scope>TISSUE SPECIFICITY</scope>
    <scope>DEVELOPMENTAL STAGE</scope>
    <scope>DISRUPTION PHENOTYPE</scope>
</reference>
<protein>
    <recommendedName>
        <fullName evidence="5">Tau-tubulin kinase homolog Asator</fullName>
        <ecNumber evidence="1">2.7.11.1</ecNumber>
    </recommendedName>
</protein>
<sequence length="1262" mass="138828">MFWHLLCVPNDENASAPDDGNQSCQPSSKQDQYLSPNRNCQKNLLRLYPPPPSKPPPLVGAILQTRLLHQISPSAIADADADLNAVGELLYPNVLQRSATLPAKHNRLGVRSRVTFKVPSSNLPAQDSYSHQPRNQVAVAAKDGILVDVKAKESVKMTSEDLLQPGHVVKERWKVVRKIGGGGFGEIYEGQDLITREQVALKVESARQPKQVLKMEVAVLKKLQGKEHVCRFIGCGRNDRFNYVVMQLQGKNLAELRRAQPRGAFSLSTTLRLGLQILKAIESIHSVGFLHRDIKPSNFSVGRLPYNCRRVYMLDFGLARQYTTGTGEVRCPRAAAGFRGTVRYASINAHRNREMGRHDDLWSLFYMLVEFVNGQLPWRKIKDKEQVGLTKEKYDHRILLKHLPSDLKQFLEHIQSLTYGDRPDYAMLIGLFERCMKRRGVKESDPYDWEKVDSTAIGNISATGNPSIPIKSDYMHGNITQMTVAASNASGTEYIRKRAEIETAHITATDPLNIKEKVDKNCNATSLAQPAKGSGEPMVQHGNAANNQNITSKGLQQQSTLTNSQVAIANIQSAPSMIEREDVQYTKLEEGAPTKFITMKPNGECDNVDIAAKCIFEQKHVEANDDIVGRASLSGVEQHYKSQIKKHNSPEIANKQIQRTGTVTNDKTSEVNRSTEEQKSTFGRLRVLTAPPMSVHDLPSGGGHSHQVSDLSGKQDPYAATSNAAPIGINSSSTKFGSQHGQIFGLAAMPPINRRSATSTNLRPSSSASQRINSGSTIGGAVGNGSNTARSSVAGDHSVTQFALIDDENVSALQQVTKGGALTLASQWKSQFDDSEDTTDNEWNREHQLQPNLEQLIKLDISLPLNEAKPFPQHGVAGTGKLINPPGEAKGRPKRYTLNITGIENYEALRISIPNCWSEPAMGNVLRKGLEPPAVQQAAFDDTVYRMDIARNVCVRETYSEITHLARPSTSSVLRNRLPSPFKKDSALQLNSTNDSLDKSRHRNSLPNVSVNDIFDDLQMKLNLDLGSAIQENNCCISGRLEIRVIPKDTSHPDDSVYYDAMGAVKNTPTANEGHDHSDQAVNNCDEMEATSAVIAFPNKSISKIMSPPGRDATEERTGASLCSLYSAGVNKLKLNGNTAPRTQFKKGSTDGFGENESEFDFPLLNPSKIPVRQSKCASWAGADFISASKPLESAEVPQEIPYHPQSDTTYSVIDSIPVRKTTYSIALECPPNISDLTPGLSYFYCNIVVPLRLFSILLTES</sequence>
<comment type="function">
    <text evidence="6">Probable serine/threonine protein kinase.</text>
</comment>
<comment type="catalytic activity">
    <reaction evidence="1">
        <text>L-seryl-[protein] + ATP = O-phospho-L-seryl-[protein] + ADP + H(+)</text>
        <dbReference type="Rhea" id="RHEA:17989"/>
        <dbReference type="Rhea" id="RHEA-COMP:9863"/>
        <dbReference type="Rhea" id="RHEA-COMP:11604"/>
        <dbReference type="ChEBI" id="CHEBI:15378"/>
        <dbReference type="ChEBI" id="CHEBI:29999"/>
        <dbReference type="ChEBI" id="CHEBI:30616"/>
        <dbReference type="ChEBI" id="CHEBI:83421"/>
        <dbReference type="ChEBI" id="CHEBI:456216"/>
        <dbReference type="EC" id="2.7.11.1"/>
    </reaction>
</comment>
<comment type="catalytic activity">
    <reaction evidence="1">
        <text>L-threonyl-[protein] + ATP = O-phospho-L-threonyl-[protein] + ADP + H(+)</text>
        <dbReference type="Rhea" id="RHEA:46608"/>
        <dbReference type="Rhea" id="RHEA-COMP:11060"/>
        <dbReference type="Rhea" id="RHEA-COMP:11605"/>
        <dbReference type="ChEBI" id="CHEBI:15378"/>
        <dbReference type="ChEBI" id="CHEBI:30013"/>
        <dbReference type="ChEBI" id="CHEBI:30616"/>
        <dbReference type="ChEBI" id="CHEBI:61977"/>
        <dbReference type="ChEBI" id="CHEBI:456216"/>
        <dbReference type="EC" id="2.7.11.1"/>
    </reaction>
</comment>
<comment type="cofactor">
    <cofactor evidence="6">
        <name>Mg(2+)</name>
        <dbReference type="ChEBI" id="CHEBI:18420"/>
    </cofactor>
</comment>
<comment type="subunit">
    <text evidence="4">Interacts with Mgtor.</text>
</comment>
<comment type="subcellular location">
    <subcellularLocation>
        <location evidence="4">Cytoplasm</location>
        <location evidence="4">Cytoskeleton</location>
        <location evidence="4">Spindle</location>
    </subcellularLocation>
    <subcellularLocation>
        <location evidence="4">Cytoplasm</location>
    </subcellularLocation>
    <text evidence="4">Found in the cytoplasm during interphase. Localizes to the mitotic spindle in dividing cells.</text>
</comment>
<comment type="alternative products">
    <event type="alternative splicing"/>
    <isoform>
        <id>Q8IMC6-1</id>
        <name evidence="8">E</name>
        <sequence type="displayed"/>
    </isoform>
    <isoform>
        <id>Q8IMC6-2</id>
        <name evidence="8">F</name>
        <sequence type="described" ref="VSP_058795 VSP_058796 VSP_058797"/>
    </isoform>
</comment>
<comment type="tissue specificity">
    <text evidence="4">Detected in larval brain.</text>
</comment>
<comment type="developmental stage">
    <text evidence="4">Detected at low levels throughout development. Highest expression levels are seen in embryos.</text>
</comment>
<comment type="disruption phenotype">
    <text evidence="4">Embryonic lethal.</text>
</comment>
<comment type="similarity">
    <text evidence="6">Belongs to the protein kinase superfamily. CK1 Ser/Thr protein kinase family.</text>
</comment>
<name>ASATR_DROME</name>